<dbReference type="EC" id="3.1.1.29" evidence="1"/>
<dbReference type="EMBL" id="CP000082">
    <property type="protein sequence ID" value="AAZ18043.1"/>
    <property type="molecule type" value="Genomic_DNA"/>
</dbReference>
<dbReference type="RefSeq" id="WP_011279482.1">
    <property type="nucleotide sequence ID" value="NC_007204.1"/>
</dbReference>
<dbReference type="SMR" id="Q4FVB5"/>
<dbReference type="STRING" id="259536.Psyc_0170"/>
<dbReference type="KEGG" id="par:Psyc_0170"/>
<dbReference type="eggNOG" id="COG0193">
    <property type="taxonomic scope" value="Bacteria"/>
</dbReference>
<dbReference type="HOGENOM" id="CLU_062456_3_1_6"/>
<dbReference type="OrthoDB" id="9800507at2"/>
<dbReference type="Proteomes" id="UP000000546">
    <property type="component" value="Chromosome"/>
</dbReference>
<dbReference type="GO" id="GO:0005737">
    <property type="term" value="C:cytoplasm"/>
    <property type="evidence" value="ECO:0007669"/>
    <property type="project" value="UniProtKB-SubCell"/>
</dbReference>
<dbReference type="GO" id="GO:0004045">
    <property type="term" value="F:peptidyl-tRNA hydrolase activity"/>
    <property type="evidence" value="ECO:0007669"/>
    <property type="project" value="UniProtKB-UniRule"/>
</dbReference>
<dbReference type="GO" id="GO:0000049">
    <property type="term" value="F:tRNA binding"/>
    <property type="evidence" value="ECO:0007669"/>
    <property type="project" value="UniProtKB-UniRule"/>
</dbReference>
<dbReference type="GO" id="GO:0006515">
    <property type="term" value="P:protein quality control for misfolded or incompletely synthesized proteins"/>
    <property type="evidence" value="ECO:0007669"/>
    <property type="project" value="UniProtKB-UniRule"/>
</dbReference>
<dbReference type="GO" id="GO:0072344">
    <property type="term" value="P:rescue of stalled ribosome"/>
    <property type="evidence" value="ECO:0007669"/>
    <property type="project" value="UniProtKB-UniRule"/>
</dbReference>
<dbReference type="CDD" id="cd00462">
    <property type="entry name" value="PTH"/>
    <property type="match status" value="1"/>
</dbReference>
<dbReference type="FunFam" id="3.40.50.1470:FF:000001">
    <property type="entry name" value="Peptidyl-tRNA hydrolase"/>
    <property type="match status" value="1"/>
</dbReference>
<dbReference type="Gene3D" id="3.40.50.1470">
    <property type="entry name" value="Peptidyl-tRNA hydrolase"/>
    <property type="match status" value="1"/>
</dbReference>
<dbReference type="HAMAP" id="MF_00083">
    <property type="entry name" value="Pept_tRNA_hydro_bact"/>
    <property type="match status" value="1"/>
</dbReference>
<dbReference type="InterPro" id="IPR001328">
    <property type="entry name" value="Pept_tRNA_hydro"/>
</dbReference>
<dbReference type="InterPro" id="IPR018171">
    <property type="entry name" value="Pept_tRNA_hydro_CS"/>
</dbReference>
<dbReference type="InterPro" id="IPR036416">
    <property type="entry name" value="Pept_tRNA_hydro_sf"/>
</dbReference>
<dbReference type="NCBIfam" id="TIGR00447">
    <property type="entry name" value="pth"/>
    <property type="match status" value="1"/>
</dbReference>
<dbReference type="PANTHER" id="PTHR17224">
    <property type="entry name" value="PEPTIDYL-TRNA HYDROLASE"/>
    <property type="match status" value="1"/>
</dbReference>
<dbReference type="PANTHER" id="PTHR17224:SF1">
    <property type="entry name" value="PEPTIDYL-TRNA HYDROLASE"/>
    <property type="match status" value="1"/>
</dbReference>
<dbReference type="Pfam" id="PF01195">
    <property type="entry name" value="Pept_tRNA_hydro"/>
    <property type="match status" value="1"/>
</dbReference>
<dbReference type="SUPFAM" id="SSF53178">
    <property type="entry name" value="Peptidyl-tRNA hydrolase-like"/>
    <property type="match status" value="1"/>
</dbReference>
<dbReference type="PROSITE" id="PS01196">
    <property type="entry name" value="PEPT_TRNA_HYDROL_2"/>
    <property type="match status" value="1"/>
</dbReference>
<evidence type="ECO:0000255" key="1">
    <source>
        <dbReference type="HAMAP-Rule" id="MF_00083"/>
    </source>
</evidence>
<comment type="function">
    <text evidence="1">Hydrolyzes ribosome-free peptidyl-tRNAs (with 1 or more amino acids incorporated), which drop off the ribosome during protein synthesis, or as a result of ribosome stalling.</text>
</comment>
<comment type="function">
    <text evidence="1">Catalyzes the release of premature peptidyl moieties from peptidyl-tRNA molecules trapped in stalled 50S ribosomal subunits, and thus maintains levels of free tRNAs and 50S ribosomes.</text>
</comment>
<comment type="catalytic activity">
    <reaction evidence="1">
        <text>an N-acyl-L-alpha-aminoacyl-tRNA + H2O = an N-acyl-L-amino acid + a tRNA + H(+)</text>
        <dbReference type="Rhea" id="RHEA:54448"/>
        <dbReference type="Rhea" id="RHEA-COMP:10123"/>
        <dbReference type="Rhea" id="RHEA-COMP:13883"/>
        <dbReference type="ChEBI" id="CHEBI:15377"/>
        <dbReference type="ChEBI" id="CHEBI:15378"/>
        <dbReference type="ChEBI" id="CHEBI:59874"/>
        <dbReference type="ChEBI" id="CHEBI:78442"/>
        <dbReference type="ChEBI" id="CHEBI:138191"/>
        <dbReference type="EC" id="3.1.1.29"/>
    </reaction>
</comment>
<comment type="subunit">
    <text evidence="1">Monomer.</text>
</comment>
<comment type="subcellular location">
    <subcellularLocation>
        <location evidence="1">Cytoplasm</location>
    </subcellularLocation>
</comment>
<comment type="similarity">
    <text evidence="1">Belongs to the PTH family.</text>
</comment>
<reference key="1">
    <citation type="journal article" date="2010" name="Appl. Environ. Microbiol.">
        <title>The genome sequence of Psychrobacter arcticus 273-4, a psychroactive Siberian permafrost bacterium, reveals mechanisms for adaptation to low-temperature growth.</title>
        <authorList>
            <person name="Ayala-del-Rio H.L."/>
            <person name="Chain P.S."/>
            <person name="Grzymski J.J."/>
            <person name="Ponder M.A."/>
            <person name="Ivanova N."/>
            <person name="Bergholz P.W."/>
            <person name="Di Bartolo G."/>
            <person name="Hauser L."/>
            <person name="Land M."/>
            <person name="Bakermans C."/>
            <person name="Rodrigues D."/>
            <person name="Klappenbach J."/>
            <person name="Zarka D."/>
            <person name="Larimer F."/>
            <person name="Richardson P."/>
            <person name="Murray A."/>
            <person name="Thomashow M."/>
            <person name="Tiedje J.M."/>
        </authorList>
    </citation>
    <scope>NUCLEOTIDE SEQUENCE [LARGE SCALE GENOMIC DNA]</scope>
    <source>
        <strain>DSM 17307 / VKM B-2377 / 273-4</strain>
    </source>
</reference>
<sequence>MAIKLIVGLGNPGQEYMFTRHNAGFWFVHHLAQQFNIALAPDKKFHGVTGRGQIHGSDVRLLMPLTFMNKSGQSVVPMVKFYGIDNDELLIAHDELDIPAGSIKLKTDGGHGGHNGLRDITPHIGNDFHRLRVGIGHPGHKSKVSGHVLSKAAPDEQIAIDSALSAAFEALPLLLDGDIEKARSQINGFKLPE</sequence>
<protein>
    <recommendedName>
        <fullName evidence="1">Peptidyl-tRNA hydrolase</fullName>
        <shortName evidence="1">Pth</shortName>
        <ecNumber evidence="1">3.1.1.29</ecNumber>
    </recommendedName>
</protein>
<proteinExistence type="inferred from homology"/>
<gene>
    <name evidence="1" type="primary">pth</name>
    <name type="ordered locus">Psyc_0170</name>
</gene>
<feature type="chain" id="PRO_0000264083" description="Peptidyl-tRNA hydrolase">
    <location>
        <begin position="1"/>
        <end position="193"/>
    </location>
</feature>
<feature type="active site" description="Proton acceptor" evidence="1">
    <location>
        <position position="21"/>
    </location>
</feature>
<feature type="binding site" evidence="1">
    <location>
        <position position="16"/>
    </location>
    <ligand>
        <name>tRNA</name>
        <dbReference type="ChEBI" id="CHEBI:17843"/>
    </ligand>
</feature>
<feature type="binding site" evidence="1">
    <location>
        <position position="67"/>
    </location>
    <ligand>
        <name>tRNA</name>
        <dbReference type="ChEBI" id="CHEBI:17843"/>
    </ligand>
</feature>
<feature type="binding site" evidence="1">
    <location>
        <position position="69"/>
    </location>
    <ligand>
        <name>tRNA</name>
        <dbReference type="ChEBI" id="CHEBI:17843"/>
    </ligand>
</feature>
<feature type="binding site" evidence="1">
    <location>
        <position position="115"/>
    </location>
    <ligand>
        <name>tRNA</name>
        <dbReference type="ChEBI" id="CHEBI:17843"/>
    </ligand>
</feature>
<feature type="site" description="Discriminates between blocked and unblocked aminoacyl-tRNA" evidence="1">
    <location>
        <position position="11"/>
    </location>
</feature>
<feature type="site" description="Stabilizes the basic form of H active site to accept a proton" evidence="1">
    <location>
        <position position="94"/>
    </location>
</feature>
<keyword id="KW-0963">Cytoplasm</keyword>
<keyword id="KW-0378">Hydrolase</keyword>
<keyword id="KW-1185">Reference proteome</keyword>
<keyword id="KW-0694">RNA-binding</keyword>
<keyword id="KW-0820">tRNA-binding</keyword>
<accession>Q4FVB5</accession>
<name>PTH_PSYA2</name>
<organism>
    <name type="scientific">Psychrobacter arcticus (strain DSM 17307 / VKM B-2377 / 273-4)</name>
    <dbReference type="NCBI Taxonomy" id="259536"/>
    <lineage>
        <taxon>Bacteria</taxon>
        <taxon>Pseudomonadati</taxon>
        <taxon>Pseudomonadota</taxon>
        <taxon>Gammaproteobacteria</taxon>
        <taxon>Moraxellales</taxon>
        <taxon>Moraxellaceae</taxon>
        <taxon>Psychrobacter</taxon>
    </lineage>
</organism>